<dbReference type="EC" id="3.1.3.9" evidence="4"/>
<dbReference type="EMBL" id="U00445">
    <property type="protein sequence ID" value="AAC52122.1"/>
    <property type="molecule type" value="mRNA"/>
</dbReference>
<dbReference type="EMBL" id="U91573">
    <property type="protein sequence ID" value="AAC53166.1"/>
    <property type="molecule type" value="Genomic_DNA"/>
</dbReference>
<dbReference type="EMBL" id="AK050279">
    <property type="protein sequence ID" value="BAC34162.1"/>
    <property type="molecule type" value="mRNA"/>
</dbReference>
<dbReference type="EMBL" id="AK052656">
    <property type="protein sequence ID" value="BAC35084.1"/>
    <property type="molecule type" value="mRNA"/>
</dbReference>
<dbReference type="EMBL" id="AL590969">
    <property type="status" value="NOT_ANNOTATED_CDS"/>
    <property type="molecule type" value="Genomic_DNA"/>
</dbReference>
<dbReference type="EMBL" id="BC013448">
    <property type="protein sequence ID" value="AAH13448.1"/>
    <property type="molecule type" value="mRNA"/>
</dbReference>
<dbReference type="CCDS" id="CCDS25466.1"/>
<dbReference type="PIR" id="A48589">
    <property type="entry name" value="A48589"/>
</dbReference>
<dbReference type="RefSeq" id="NP_032087.2">
    <property type="nucleotide sequence ID" value="NM_008061.4"/>
</dbReference>
<dbReference type="FunCoup" id="P35576">
    <property type="interactions" value="963"/>
</dbReference>
<dbReference type="STRING" id="10090.ENSMUSP00000019469"/>
<dbReference type="GlyCosmos" id="P35576">
    <property type="glycosylation" value="1 site, No reported glycans"/>
</dbReference>
<dbReference type="GlyGen" id="P35576">
    <property type="glycosylation" value="1 site"/>
</dbReference>
<dbReference type="PhosphoSitePlus" id="P35576"/>
<dbReference type="SwissPalm" id="P35576"/>
<dbReference type="jPOST" id="P35576"/>
<dbReference type="PaxDb" id="10090-ENSMUSP00000019469"/>
<dbReference type="ProteomicsDB" id="271629"/>
<dbReference type="Antibodypedia" id="29454">
    <property type="antibodies" value="144 antibodies from 25 providers"/>
</dbReference>
<dbReference type="DNASU" id="14377"/>
<dbReference type="Ensembl" id="ENSMUST00000019469.3">
    <property type="protein sequence ID" value="ENSMUSP00000019469.3"/>
    <property type="gene ID" value="ENSMUSG00000078650.3"/>
</dbReference>
<dbReference type="GeneID" id="14377"/>
<dbReference type="KEGG" id="mmu:14377"/>
<dbReference type="UCSC" id="uc007lor.1">
    <property type="organism name" value="mouse"/>
</dbReference>
<dbReference type="AGR" id="MGI:95607"/>
<dbReference type="CTD" id="2538"/>
<dbReference type="MGI" id="MGI:95607">
    <property type="gene designation" value="G6pc1"/>
</dbReference>
<dbReference type="VEuPathDB" id="HostDB:ENSMUSG00000078650"/>
<dbReference type="eggNOG" id="ENOG502QS9B">
    <property type="taxonomic scope" value="Eukaryota"/>
</dbReference>
<dbReference type="GeneTree" id="ENSGT00950000183150"/>
<dbReference type="HOGENOM" id="CLU_052517_0_0_1"/>
<dbReference type="InParanoid" id="P35576"/>
<dbReference type="OMA" id="WCEHPEW"/>
<dbReference type="OrthoDB" id="6416209at2759"/>
<dbReference type="PhylomeDB" id="P35576"/>
<dbReference type="TreeFam" id="TF324388"/>
<dbReference type="BRENDA" id="3.1.3.9">
    <property type="organism ID" value="3474"/>
</dbReference>
<dbReference type="Reactome" id="R-MMU-70263">
    <property type="pathway name" value="Gluconeogenesis"/>
</dbReference>
<dbReference type="UniPathway" id="UPA00138"/>
<dbReference type="BioGRID-ORCS" id="14377">
    <property type="hits" value="2 hits in 78 CRISPR screens"/>
</dbReference>
<dbReference type="ChiTaRS" id="G6pc">
    <property type="organism name" value="mouse"/>
</dbReference>
<dbReference type="PRO" id="PR:P35576"/>
<dbReference type="Proteomes" id="UP000000589">
    <property type="component" value="Chromosome 11"/>
</dbReference>
<dbReference type="RNAct" id="P35576">
    <property type="molecule type" value="protein"/>
</dbReference>
<dbReference type="Bgee" id="ENSMUSG00000078650">
    <property type="expression patterns" value="Expressed in right kidney and 31 other cell types or tissues"/>
</dbReference>
<dbReference type="GO" id="GO:0005783">
    <property type="term" value="C:endoplasmic reticulum"/>
    <property type="evidence" value="ECO:0000314"/>
    <property type="project" value="MGI"/>
</dbReference>
<dbReference type="GO" id="GO:0005789">
    <property type="term" value="C:endoplasmic reticulum membrane"/>
    <property type="evidence" value="ECO:0000304"/>
    <property type="project" value="Reactome"/>
</dbReference>
<dbReference type="GO" id="GO:0004346">
    <property type="term" value="F:glucose-6-phosphatase activity"/>
    <property type="evidence" value="ECO:0000314"/>
    <property type="project" value="MGI"/>
</dbReference>
<dbReference type="GO" id="GO:0042301">
    <property type="term" value="F:phosphate ion binding"/>
    <property type="evidence" value="ECO:0007669"/>
    <property type="project" value="Ensembl"/>
</dbReference>
<dbReference type="GO" id="GO:0016773">
    <property type="term" value="F:phosphotransferase activity, alcohol group as acceptor"/>
    <property type="evidence" value="ECO:0000314"/>
    <property type="project" value="MGI"/>
</dbReference>
<dbReference type="GO" id="GO:0032869">
    <property type="term" value="P:cellular response to insulin stimulus"/>
    <property type="evidence" value="ECO:0007669"/>
    <property type="project" value="Ensembl"/>
</dbReference>
<dbReference type="GO" id="GO:0042632">
    <property type="term" value="P:cholesterol homeostasis"/>
    <property type="evidence" value="ECO:0000315"/>
    <property type="project" value="MGI"/>
</dbReference>
<dbReference type="GO" id="GO:0006094">
    <property type="term" value="P:gluconeogenesis"/>
    <property type="evidence" value="ECO:0000315"/>
    <property type="project" value="MGI"/>
</dbReference>
<dbReference type="GO" id="GO:0051156">
    <property type="term" value="P:glucose 6-phosphate metabolic process"/>
    <property type="evidence" value="ECO:0000315"/>
    <property type="project" value="MGI"/>
</dbReference>
<dbReference type="GO" id="GO:0042593">
    <property type="term" value="P:glucose homeostasis"/>
    <property type="evidence" value="ECO:0000315"/>
    <property type="project" value="MGI"/>
</dbReference>
<dbReference type="GO" id="GO:0015760">
    <property type="term" value="P:glucose-6-phosphate transport"/>
    <property type="evidence" value="ECO:0000314"/>
    <property type="project" value="MGI"/>
</dbReference>
<dbReference type="GO" id="GO:0005980">
    <property type="term" value="P:glycogen catabolic process"/>
    <property type="evidence" value="ECO:0000315"/>
    <property type="project" value="MGI"/>
</dbReference>
<dbReference type="GO" id="GO:0005977">
    <property type="term" value="P:glycogen metabolic process"/>
    <property type="evidence" value="ECO:0000315"/>
    <property type="project" value="MGI"/>
</dbReference>
<dbReference type="GO" id="GO:0035264">
    <property type="term" value="P:multicellular organism growth"/>
    <property type="evidence" value="ECO:0000315"/>
    <property type="project" value="MGI"/>
</dbReference>
<dbReference type="GO" id="GO:0010468">
    <property type="term" value="P:regulation of gene expression"/>
    <property type="evidence" value="ECO:0000315"/>
    <property type="project" value="MGI"/>
</dbReference>
<dbReference type="GO" id="GO:0061771">
    <property type="term" value="P:response to caloric restriction"/>
    <property type="evidence" value="ECO:0000314"/>
    <property type="project" value="MGI"/>
</dbReference>
<dbReference type="GO" id="GO:0009743">
    <property type="term" value="P:response to carbohydrate"/>
    <property type="evidence" value="ECO:0007669"/>
    <property type="project" value="Ensembl"/>
</dbReference>
<dbReference type="GO" id="GO:0032094">
    <property type="term" value="P:response to food"/>
    <property type="evidence" value="ECO:0007669"/>
    <property type="project" value="Ensembl"/>
</dbReference>
<dbReference type="GO" id="GO:1904638">
    <property type="term" value="P:response to resveratrol"/>
    <property type="evidence" value="ECO:0007669"/>
    <property type="project" value="Ensembl"/>
</dbReference>
<dbReference type="GO" id="GO:0008202">
    <property type="term" value="P:steroid metabolic process"/>
    <property type="evidence" value="ECO:0000315"/>
    <property type="project" value="MGI"/>
</dbReference>
<dbReference type="GO" id="GO:0006641">
    <property type="term" value="P:triglyceride metabolic process"/>
    <property type="evidence" value="ECO:0000315"/>
    <property type="project" value="MGI"/>
</dbReference>
<dbReference type="GO" id="GO:0046415">
    <property type="term" value="P:urate metabolic process"/>
    <property type="evidence" value="ECO:0000315"/>
    <property type="project" value="MGI"/>
</dbReference>
<dbReference type="CDD" id="cd03381">
    <property type="entry name" value="PAP2_glucose_6_phosphatase"/>
    <property type="match status" value="1"/>
</dbReference>
<dbReference type="FunFam" id="1.20.144.10:FF:000010">
    <property type="entry name" value="Glucose-6-phosphatase"/>
    <property type="match status" value="1"/>
</dbReference>
<dbReference type="Gene3D" id="1.20.144.10">
    <property type="entry name" value="Phosphatidic acid phosphatase type 2/haloperoxidase"/>
    <property type="match status" value="1"/>
</dbReference>
<dbReference type="InterPro" id="IPR016275">
    <property type="entry name" value="Glucose-6-phosphatase"/>
</dbReference>
<dbReference type="InterPro" id="IPR036938">
    <property type="entry name" value="P_Acid_Pase_2/haloperoxi_sf"/>
</dbReference>
<dbReference type="InterPro" id="IPR000326">
    <property type="entry name" value="P_Acid_Pase_2/haloperoxidase"/>
</dbReference>
<dbReference type="PANTHER" id="PTHR12591">
    <property type="entry name" value="GLUCOSE-6-PHOSPHATASE"/>
    <property type="match status" value="1"/>
</dbReference>
<dbReference type="PANTHER" id="PTHR12591:SF3">
    <property type="entry name" value="GLUCOSE-6-PHOSPHATASE CATALYTIC SUBUNIT 1"/>
    <property type="match status" value="1"/>
</dbReference>
<dbReference type="Pfam" id="PF01569">
    <property type="entry name" value="PAP2"/>
    <property type="match status" value="1"/>
</dbReference>
<dbReference type="PIRSF" id="PIRSF000905">
    <property type="entry name" value="Glucose-6-phosphatase"/>
    <property type="match status" value="1"/>
</dbReference>
<dbReference type="SMART" id="SM00014">
    <property type="entry name" value="acidPPc"/>
    <property type="match status" value="1"/>
</dbReference>
<dbReference type="SUPFAM" id="SSF48317">
    <property type="entry name" value="Acid phosphatase/Vanadium-dependent haloperoxidase"/>
    <property type="match status" value="1"/>
</dbReference>
<organism>
    <name type="scientific">Mus musculus</name>
    <name type="common">Mouse</name>
    <dbReference type="NCBI Taxonomy" id="10090"/>
    <lineage>
        <taxon>Eukaryota</taxon>
        <taxon>Metazoa</taxon>
        <taxon>Chordata</taxon>
        <taxon>Craniata</taxon>
        <taxon>Vertebrata</taxon>
        <taxon>Euteleostomi</taxon>
        <taxon>Mammalia</taxon>
        <taxon>Eutheria</taxon>
        <taxon>Euarchontoglires</taxon>
        <taxon>Glires</taxon>
        <taxon>Rodentia</taxon>
        <taxon>Myomorpha</taxon>
        <taxon>Muroidea</taxon>
        <taxon>Muridae</taxon>
        <taxon>Murinae</taxon>
        <taxon>Mus</taxon>
        <taxon>Mus</taxon>
    </lineage>
</organism>
<accession>P35576</accession>
<accession>Q91WV3</accession>
<gene>
    <name type="primary">G6pc1</name>
    <name type="synonym">G6pc</name>
    <name type="synonym">G6pt</name>
</gene>
<comment type="function">
    <text evidence="4 5">Hydrolyzes glucose-6-phosphate to glucose in the endoplasmic reticulum. Forms with the glucose-6-phosphate transporter (SLC37A4/G6PT) the complex responsible for glucose production in the terminal step of glycogenolysis and gluconeogenesis. Hence, it is the key enzyme in homeostatic regulation of blood glucose levels.</text>
</comment>
<comment type="catalytic activity">
    <reaction evidence="4">
        <text>D-glucose 6-phosphate + H2O = D-glucose + phosphate</text>
        <dbReference type="Rhea" id="RHEA:16689"/>
        <dbReference type="ChEBI" id="CHEBI:4167"/>
        <dbReference type="ChEBI" id="CHEBI:15377"/>
        <dbReference type="ChEBI" id="CHEBI:43474"/>
        <dbReference type="ChEBI" id="CHEBI:61548"/>
        <dbReference type="EC" id="3.1.3.9"/>
    </reaction>
</comment>
<comment type="pathway">
    <text evidence="7">Carbohydrate biosynthesis; gluconeogenesis.</text>
</comment>
<comment type="subcellular location">
    <subcellularLocation>
        <location evidence="2">Endoplasmic reticulum membrane</location>
        <topology evidence="3">Multi-pass membrane protein</topology>
    </subcellularLocation>
</comment>
<comment type="tissue specificity">
    <text>Liver and kidney.</text>
</comment>
<comment type="disruption phenotype">
    <text evidence="5">Deficient mice display hypoglycaemia, growth retardation, hepatomegaly, kidney enlargement, hyperlipidaemia, and hyperuricaemia.</text>
</comment>
<comment type="similarity">
    <text evidence="6">Belongs to the glucose-6-phosphatase family.</text>
</comment>
<feature type="chain" id="PRO_0000087414" description="Glucose-6-phosphatase catalytic subunit 1">
    <location>
        <begin position="1"/>
        <end position="357"/>
    </location>
</feature>
<feature type="topological domain" description="Lumenal" evidence="2">
    <location>
        <begin position="1"/>
        <end position="28"/>
    </location>
</feature>
<feature type="transmembrane region" description="Helical" evidence="3">
    <location>
        <begin position="29"/>
        <end position="49"/>
    </location>
</feature>
<feature type="topological domain" description="Cytoplasmic" evidence="2">
    <location>
        <begin position="50"/>
        <end position="60"/>
    </location>
</feature>
<feature type="transmembrane region" description="Helical" evidence="3">
    <location>
        <begin position="61"/>
        <end position="81"/>
    </location>
</feature>
<feature type="topological domain" description="Lumenal" evidence="2">
    <location>
        <begin position="82"/>
        <end position="117"/>
    </location>
</feature>
<feature type="transmembrane region" description="Helical" evidence="3">
    <location>
        <begin position="118"/>
        <end position="138"/>
    </location>
</feature>
<feature type="topological domain" description="Cytoplasmic" evidence="2">
    <location>
        <begin position="139"/>
        <end position="147"/>
    </location>
</feature>
<feature type="transmembrane region" description="Helical" evidence="3">
    <location>
        <begin position="148"/>
        <end position="168"/>
    </location>
</feature>
<feature type="topological domain" description="Lumenal" evidence="2">
    <location>
        <begin position="169"/>
        <end position="179"/>
    </location>
</feature>
<feature type="transmembrane region" description="Helical" evidence="3">
    <location>
        <begin position="180"/>
        <end position="202"/>
    </location>
</feature>
<feature type="topological domain" description="Cytoplasmic" evidence="2">
    <location>
        <begin position="203"/>
        <end position="211"/>
    </location>
</feature>
<feature type="transmembrane region" description="Helical" evidence="3">
    <location>
        <begin position="212"/>
        <end position="232"/>
    </location>
</feature>
<feature type="topological domain" description="Lumenal" evidence="2">
    <location>
        <begin position="233"/>
        <end position="254"/>
    </location>
</feature>
<feature type="transmembrane region" description="Helical" evidence="3">
    <location>
        <begin position="255"/>
        <end position="275"/>
    </location>
</feature>
<feature type="topological domain" description="Cytoplasmic" evidence="2">
    <location>
        <begin position="276"/>
        <end position="291"/>
    </location>
</feature>
<feature type="transmembrane region" description="Helical" evidence="3">
    <location>
        <begin position="292"/>
        <end position="312"/>
    </location>
</feature>
<feature type="topological domain" description="Lumenal" evidence="2">
    <location>
        <begin position="313"/>
        <end position="320"/>
    </location>
</feature>
<feature type="transmembrane region" description="Helical" evidence="3">
    <location>
        <begin position="321"/>
        <end position="341"/>
    </location>
</feature>
<feature type="topological domain" description="Cytoplasmic" evidence="2">
    <location>
        <begin position="342"/>
        <end position="357"/>
    </location>
</feature>
<feature type="short sequence motif" description="Prevents secretion from ER" evidence="3">
    <location>
        <begin position="354"/>
        <end position="357"/>
    </location>
</feature>
<feature type="active site" description="Proton donor" evidence="3">
    <location>
        <position position="119"/>
    </location>
</feature>
<feature type="active site" description="Nucleophile" evidence="2">
    <location>
        <position position="176"/>
    </location>
</feature>
<feature type="binding site" evidence="3">
    <location>
        <position position="83"/>
    </location>
    <ligand>
        <name>substrate</name>
    </ligand>
</feature>
<feature type="binding site" evidence="3">
    <location>
        <position position="170"/>
    </location>
    <ligand>
        <name>substrate</name>
    </ligand>
</feature>
<feature type="glycosylation site" description="N-linked (GlcNAc...) asparagine" evidence="1">
    <location>
        <position position="96"/>
    </location>
</feature>
<feature type="sequence conflict" description="In Ref. 1; AAC52122." evidence="6" ref="1">
    <original>LL</original>
    <variation>SF</variation>
    <location>
        <begin position="291"/>
        <end position="292"/>
    </location>
</feature>
<keyword id="KW-0256">Endoplasmic reticulum</keyword>
<keyword id="KW-0312">Gluconeogenesis</keyword>
<keyword id="KW-0325">Glycoprotein</keyword>
<keyword id="KW-0378">Hydrolase</keyword>
<keyword id="KW-0472">Membrane</keyword>
<keyword id="KW-1185">Reference proteome</keyword>
<keyword id="KW-0812">Transmembrane</keyword>
<keyword id="KW-1133">Transmembrane helix</keyword>
<proteinExistence type="evidence at protein level"/>
<sequence length="357" mass="40473">MEEGMNILHDFGIQSTRYLQVNYQDSQDWFILVSVIADLRNAFYVLFPIWFHLKETVGINLLWVAVVGDWFNLVFKWILFGQRPYWWVLDTDYYSNSSVPIIKQFPVTCETGPGSPSGHAMGAAGVYYVMVTSTLAIFRGKKKPTYGFRCLNVILWLGFWAVQLNVCLSRIYLAAHFPHQVVAGVLSGIAVAETFSHIRGIYNASLRKYCLITIFLFGFALGFYLLLKGLGVDLLWTLEKAKRWCERPEWVHLDTTPFASLFKNLGTLLGLGLALNSSMYRKSCKGELSKLLPFRFACIVASLVLLHLFDSLKPPSQVELIFYILSFCKSATVPFASVSLIPYCLARILGQTHKKSL</sequence>
<protein>
    <recommendedName>
        <fullName>Glucose-6-phosphatase catalytic subunit 1</fullName>
        <ecNumber evidence="4">3.1.3.9</ecNumber>
    </recommendedName>
    <alternativeName>
        <fullName>Glucose-6-phosphatase</fullName>
        <shortName>G-6-Pase</shortName>
        <shortName>G6Pase</shortName>
    </alternativeName>
</protein>
<reference key="1">
    <citation type="journal article" date="1993" name="J. Biol. Chem.">
        <title>Isolation of the gene for murine glucose-6-phosphatase, the enzyme deficient in glycogen storage disease type 1A.</title>
        <authorList>
            <person name="Shelly L.L."/>
            <person name="Lei K.-J."/>
            <person name="Pan C.-J."/>
            <person name="Sakata S.F."/>
            <person name="Ruppert S."/>
            <person name="Schutz G."/>
            <person name="Chou J.Y."/>
        </authorList>
    </citation>
    <scope>NUCLEOTIDE SEQUENCE [MRNA]</scope>
    <scope>CATALYTIC ACTIVITY</scope>
    <scope>FUNCTION</scope>
    <source>
        <tissue>Liver</tissue>
    </source>
</reference>
<reference key="2">
    <citation type="journal article" date="2005" name="Science">
        <title>The transcriptional landscape of the mammalian genome.</title>
        <authorList>
            <person name="Carninci P."/>
            <person name="Kasukawa T."/>
            <person name="Katayama S."/>
            <person name="Gough J."/>
            <person name="Frith M.C."/>
            <person name="Maeda N."/>
            <person name="Oyama R."/>
            <person name="Ravasi T."/>
            <person name="Lenhard B."/>
            <person name="Wells C."/>
            <person name="Kodzius R."/>
            <person name="Shimokawa K."/>
            <person name="Bajic V.B."/>
            <person name="Brenner S.E."/>
            <person name="Batalov S."/>
            <person name="Forrest A.R."/>
            <person name="Zavolan M."/>
            <person name="Davis M.J."/>
            <person name="Wilming L.G."/>
            <person name="Aidinis V."/>
            <person name="Allen J.E."/>
            <person name="Ambesi-Impiombato A."/>
            <person name="Apweiler R."/>
            <person name="Aturaliya R.N."/>
            <person name="Bailey T.L."/>
            <person name="Bansal M."/>
            <person name="Baxter L."/>
            <person name="Beisel K.W."/>
            <person name="Bersano T."/>
            <person name="Bono H."/>
            <person name="Chalk A.M."/>
            <person name="Chiu K.P."/>
            <person name="Choudhary V."/>
            <person name="Christoffels A."/>
            <person name="Clutterbuck D.R."/>
            <person name="Crowe M.L."/>
            <person name="Dalla E."/>
            <person name="Dalrymple B.P."/>
            <person name="de Bono B."/>
            <person name="Della Gatta G."/>
            <person name="di Bernardo D."/>
            <person name="Down T."/>
            <person name="Engstrom P."/>
            <person name="Fagiolini M."/>
            <person name="Faulkner G."/>
            <person name="Fletcher C.F."/>
            <person name="Fukushima T."/>
            <person name="Furuno M."/>
            <person name="Futaki S."/>
            <person name="Gariboldi M."/>
            <person name="Georgii-Hemming P."/>
            <person name="Gingeras T.R."/>
            <person name="Gojobori T."/>
            <person name="Green R.E."/>
            <person name="Gustincich S."/>
            <person name="Harbers M."/>
            <person name="Hayashi Y."/>
            <person name="Hensch T.K."/>
            <person name="Hirokawa N."/>
            <person name="Hill D."/>
            <person name="Huminiecki L."/>
            <person name="Iacono M."/>
            <person name="Ikeo K."/>
            <person name="Iwama A."/>
            <person name="Ishikawa T."/>
            <person name="Jakt M."/>
            <person name="Kanapin A."/>
            <person name="Katoh M."/>
            <person name="Kawasawa Y."/>
            <person name="Kelso J."/>
            <person name="Kitamura H."/>
            <person name="Kitano H."/>
            <person name="Kollias G."/>
            <person name="Krishnan S.P."/>
            <person name="Kruger A."/>
            <person name="Kummerfeld S.K."/>
            <person name="Kurochkin I.V."/>
            <person name="Lareau L.F."/>
            <person name="Lazarevic D."/>
            <person name="Lipovich L."/>
            <person name="Liu J."/>
            <person name="Liuni S."/>
            <person name="McWilliam S."/>
            <person name="Madan Babu M."/>
            <person name="Madera M."/>
            <person name="Marchionni L."/>
            <person name="Matsuda H."/>
            <person name="Matsuzawa S."/>
            <person name="Miki H."/>
            <person name="Mignone F."/>
            <person name="Miyake S."/>
            <person name="Morris K."/>
            <person name="Mottagui-Tabar S."/>
            <person name="Mulder N."/>
            <person name="Nakano N."/>
            <person name="Nakauchi H."/>
            <person name="Ng P."/>
            <person name="Nilsson R."/>
            <person name="Nishiguchi S."/>
            <person name="Nishikawa S."/>
            <person name="Nori F."/>
            <person name="Ohara O."/>
            <person name="Okazaki Y."/>
            <person name="Orlando V."/>
            <person name="Pang K.C."/>
            <person name="Pavan W.J."/>
            <person name="Pavesi G."/>
            <person name="Pesole G."/>
            <person name="Petrovsky N."/>
            <person name="Piazza S."/>
            <person name="Reed J."/>
            <person name="Reid J.F."/>
            <person name="Ring B.Z."/>
            <person name="Ringwald M."/>
            <person name="Rost B."/>
            <person name="Ruan Y."/>
            <person name="Salzberg S.L."/>
            <person name="Sandelin A."/>
            <person name="Schneider C."/>
            <person name="Schoenbach C."/>
            <person name="Sekiguchi K."/>
            <person name="Semple C.A."/>
            <person name="Seno S."/>
            <person name="Sessa L."/>
            <person name="Sheng Y."/>
            <person name="Shibata Y."/>
            <person name="Shimada H."/>
            <person name="Shimada K."/>
            <person name="Silva D."/>
            <person name="Sinclair B."/>
            <person name="Sperling S."/>
            <person name="Stupka E."/>
            <person name="Sugiura K."/>
            <person name="Sultana R."/>
            <person name="Takenaka Y."/>
            <person name="Taki K."/>
            <person name="Tammoja K."/>
            <person name="Tan S.L."/>
            <person name="Tang S."/>
            <person name="Taylor M.S."/>
            <person name="Tegner J."/>
            <person name="Teichmann S.A."/>
            <person name="Ueda H.R."/>
            <person name="van Nimwegen E."/>
            <person name="Verardo R."/>
            <person name="Wei C.L."/>
            <person name="Yagi K."/>
            <person name="Yamanishi H."/>
            <person name="Zabarovsky E."/>
            <person name="Zhu S."/>
            <person name="Zimmer A."/>
            <person name="Hide W."/>
            <person name="Bult C."/>
            <person name="Grimmond S.M."/>
            <person name="Teasdale R.D."/>
            <person name="Liu E.T."/>
            <person name="Brusic V."/>
            <person name="Quackenbush J."/>
            <person name="Wahlestedt C."/>
            <person name="Mattick J.S."/>
            <person name="Hume D.A."/>
            <person name="Kai C."/>
            <person name="Sasaki D."/>
            <person name="Tomaru Y."/>
            <person name="Fukuda S."/>
            <person name="Kanamori-Katayama M."/>
            <person name="Suzuki M."/>
            <person name="Aoki J."/>
            <person name="Arakawa T."/>
            <person name="Iida J."/>
            <person name="Imamura K."/>
            <person name="Itoh M."/>
            <person name="Kato T."/>
            <person name="Kawaji H."/>
            <person name="Kawagashira N."/>
            <person name="Kawashima T."/>
            <person name="Kojima M."/>
            <person name="Kondo S."/>
            <person name="Konno H."/>
            <person name="Nakano K."/>
            <person name="Ninomiya N."/>
            <person name="Nishio T."/>
            <person name="Okada M."/>
            <person name="Plessy C."/>
            <person name="Shibata K."/>
            <person name="Shiraki T."/>
            <person name="Suzuki S."/>
            <person name="Tagami M."/>
            <person name="Waki K."/>
            <person name="Watahiki A."/>
            <person name="Okamura-Oho Y."/>
            <person name="Suzuki H."/>
            <person name="Kawai J."/>
            <person name="Hayashizaki Y."/>
        </authorList>
    </citation>
    <scope>NUCLEOTIDE SEQUENCE [LARGE SCALE MRNA]</scope>
    <source>
        <strain>C57BL/6J</strain>
        <tissue>Kidney</tissue>
        <tissue>Liver</tissue>
    </source>
</reference>
<reference key="3">
    <citation type="journal article" date="2009" name="PLoS Biol.">
        <title>Lineage-specific biology revealed by a finished genome assembly of the mouse.</title>
        <authorList>
            <person name="Church D.M."/>
            <person name="Goodstadt L."/>
            <person name="Hillier L.W."/>
            <person name="Zody M.C."/>
            <person name="Goldstein S."/>
            <person name="She X."/>
            <person name="Bult C.J."/>
            <person name="Agarwala R."/>
            <person name="Cherry J.L."/>
            <person name="DiCuccio M."/>
            <person name="Hlavina W."/>
            <person name="Kapustin Y."/>
            <person name="Meric P."/>
            <person name="Maglott D."/>
            <person name="Birtle Z."/>
            <person name="Marques A.C."/>
            <person name="Graves T."/>
            <person name="Zhou S."/>
            <person name="Teague B."/>
            <person name="Potamousis K."/>
            <person name="Churas C."/>
            <person name="Place M."/>
            <person name="Herschleb J."/>
            <person name="Runnheim R."/>
            <person name="Forrest D."/>
            <person name="Amos-Landgraf J."/>
            <person name="Schwartz D.C."/>
            <person name="Cheng Z."/>
            <person name="Lindblad-Toh K."/>
            <person name="Eichler E.E."/>
            <person name="Ponting C.P."/>
        </authorList>
    </citation>
    <scope>NUCLEOTIDE SEQUENCE [LARGE SCALE GENOMIC DNA]</scope>
    <source>
        <strain>C57BL/6J</strain>
    </source>
</reference>
<reference key="4">
    <citation type="journal article" date="2004" name="Genome Res.">
        <title>The status, quality, and expansion of the NIH full-length cDNA project: the Mammalian Gene Collection (MGC).</title>
        <authorList>
            <consortium name="The MGC Project Team"/>
        </authorList>
    </citation>
    <scope>NUCLEOTIDE SEQUENCE [LARGE SCALE MRNA]</scope>
    <source>
        <strain>FVB/N</strain>
        <tissue>Kidney</tissue>
    </source>
</reference>
<reference key="5">
    <citation type="journal article" date="1997" name="J. Biol. Chem.">
        <title>A multicomponent insulin response sequence mediates a strong repression of mouse glucose-6-phosphatase gene transcription by insulin.</title>
        <authorList>
            <person name="Streeper R.S."/>
            <person name="Svitek C.A."/>
            <person name="Chapman S."/>
            <person name="Greenbaum L.E."/>
            <person name="Taub R."/>
            <person name="O'Brien R.M."/>
        </authorList>
    </citation>
    <scope>NUCLEOTIDE SEQUENCE [GENOMIC DNA] OF 1-76</scope>
    <source>
        <strain>129/Sv</strain>
        <tissue>Liver</tissue>
    </source>
</reference>
<reference key="6">
    <citation type="journal article" date="1996" name="Nat. Genet.">
        <title>Glucose-6-phosphatase dependent substrate transport in the glycogen storage disease type-1a mouse.</title>
        <authorList>
            <person name="Lei K.-J."/>
            <person name="Chen H."/>
            <person name="Pan C.-J."/>
            <person name="Ward J.M."/>
            <person name="Mosinger B. Jr."/>
            <person name="Lee E.J."/>
            <person name="Westphal H."/>
            <person name="Mansfield B.C."/>
            <person name="Chou J.Y."/>
        </authorList>
    </citation>
    <scope>FUNCTION</scope>
    <scope>DISRUPTION PHENOTYPE</scope>
</reference>
<reference key="7">
    <citation type="journal article" date="2010" name="Cell">
        <title>A tissue-specific atlas of mouse protein phosphorylation and expression.</title>
        <authorList>
            <person name="Huttlin E.L."/>
            <person name="Jedrychowski M.P."/>
            <person name="Elias J.E."/>
            <person name="Goswami T."/>
            <person name="Rad R."/>
            <person name="Beausoleil S.A."/>
            <person name="Villen J."/>
            <person name="Haas W."/>
            <person name="Sowa M.E."/>
            <person name="Gygi S.P."/>
        </authorList>
    </citation>
    <scope>IDENTIFICATION BY MASS SPECTROMETRY [LARGE SCALE ANALYSIS]</scope>
    <source>
        <tissue>Kidney</tissue>
        <tissue>Liver</tissue>
    </source>
</reference>
<evidence type="ECO:0000250" key="1"/>
<evidence type="ECO:0000250" key="2">
    <source>
        <dbReference type="UniProtKB" id="P35575"/>
    </source>
</evidence>
<evidence type="ECO:0000255" key="3"/>
<evidence type="ECO:0000269" key="4">
    <source>
    </source>
</evidence>
<evidence type="ECO:0000269" key="5">
    <source>
    </source>
</evidence>
<evidence type="ECO:0000305" key="6"/>
<evidence type="ECO:0000305" key="7">
    <source>
    </source>
</evidence>
<name>G6PC1_MOUSE</name>